<sequence>MSTAMNKFTQTISKPATILNISDSEESGDEAGVGKVSRTTQSSERWLDLLIEKFQPSLQNITRYINWNFIRICNDRLKKEKMGYIEAKQYVEDMAWMVIASEADSIEWKCIRRQEKVTGVKYPKFFFVQHKEDWIECTGCIPYPGHDLIYDEDDDD</sequence>
<name>NS2_MPV15</name>
<keyword id="KW-0053">Apoptosis</keyword>
<keyword id="KW-1035">Host cytoplasm</keyword>
<keyword id="KW-0945">Host-virus interaction</keyword>
<keyword id="KW-1090">Inhibition of host innate immune response by virus</keyword>
<keyword id="KW-1088">Inhibition of host RIG-I by virus</keyword>
<keyword id="KW-1113">Inhibition of host RLR pathway by virus</keyword>
<keyword id="KW-0922">Interferon antiviral system evasion</keyword>
<keyword id="KW-1185">Reference proteome</keyword>
<keyword id="KW-0899">Viral immunoevasion</keyword>
<dbReference type="EMBL" id="AY743910">
    <property type="protein sequence ID" value="AAW02833.1"/>
    <property type="molecule type" value="Genomic_RNA"/>
</dbReference>
<dbReference type="PIR" id="JQ1256">
    <property type="entry name" value="MNNZ2G"/>
</dbReference>
<dbReference type="Proteomes" id="UP000133604">
    <property type="component" value="Genome"/>
</dbReference>
<dbReference type="GO" id="GO:0030430">
    <property type="term" value="C:host cell cytoplasm"/>
    <property type="evidence" value="ECO:0007669"/>
    <property type="project" value="UniProtKB-SubCell"/>
</dbReference>
<dbReference type="GO" id="GO:0039540">
    <property type="term" value="P:symbiont-mediated suppression of host cytoplasmic pattern recognition receptor signaling pathway via inhibition of RIG-I activity"/>
    <property type="evidence" value="ECO:0007669"/>
    <property type="project" value="UniProtKB-KW"/>
</dbReference>
<evidence type="ECO:0000250" key="1"/>
<evidence type="ECO:0000305" key="2"/>
<feature type="chain" id="PRO_0000142808" description="Non-structural protein 2">
    <location>
        <begin position="1"/>
        <end position="156"/>
    </location>
</feature>
<accession>P28889</accession>
<accession>Q5MKM9</accession>
<organismHost>
    <name type="scientific">Mus musculus</name>
    <name type="common">Mouse</name>
    <dbReference type="NCBI Taxonomy" id="10090"/>
</organismHost>
<organism>
    <name type="scientific">Murine pneumonia virus (strain 15)</name>
    <name type="common">MPV</name>
    <dbReference type="NCBI Taxonomy" id="296738"/>
    <lineage>
        <taxon>Viruses</taxon>
        <taxon>Riboviria</taxon>
        <taxon>Orthornavirae</taxon>
        <taxon>Negarnaviricota</taxon>
        <taxon>Haploviricotina</taxon>
        <taxon>Monjiviricetes</taxon>
        <taxon>Mononegavirales</taxon>
        <taxon>Pneumoviridae</taxon>
        <taxon>Orthopneumovirus</taxon>
        <taxon>Orthopneumovirus muris</taxon>
        <taxon>murine pneumonia virus</taxon>
    </lineage>
</organism>
<comment type="function">
    <text evidence="1">Plays a major role in antagonizing the type I IFN-mediated antiviral response. May also inhibit viral transcription and RNA replication (By similarity).</text>
</comment>
<comment type="subcellular location">
    <subcellularLocation>
        <location evidence="2">Host cytoplasm</location>
    </subcellularLocation>
</comment>
<comment type="similarity">
    <text evidence="2">Belongs to the pneumovirus non-structural protein 2 family.</text>
</comment>
<proteinExistence type="inferred from homology"/>
<reference key="1">
    <citation type="journal article" date="1991" name="J. Gen. Virol.">
        <title>Genes 1 and 2 of pneumonia virus of mice encode proteins which have little homology with the 1C and 1B proteins of human respiratory syncytial virus.</title>
        <authorList>
            <person name="Chambers P."/>
            <person name="Pringle C.R."/>
            <person name="Easton A.J."/>
        </authorList>
    </citation>
    <scope>NUCLEOTIDE SEQUENCE [GENOMIC RNA]</scope>
</reference>
<reference key="2">
    <citation type="journal article" date="2005" name="J. Gen. Virol.">
        <title>Genome sequence of the non-pathogenic strain 15 of pneumonia virus of mice and comparison with the genome of the pathogenic strain J3666.</title>
        <authorList>
            <person name="Thorpe L.C."/>
            <person name="Easton A.J."/>
        </authorList>
    </citation>
    <scope>NUCLEOTIDE SEQUENCE [GENOMIC RNA]</scope>
</reference>
<protein>
    <recommendedName>
        <fullName>Non-structural protein 2</fullName>
        <shortName>NS2</shortName>
    </recommendedName>
    <alternativeName>
        <fullName>Non-structural protein 1B</fullName>
    </alternativeName>
</protein>
<gene>
    <name type="primary">1B</name>
    <name type="synonym">NS2</name>
</gene>